<organism>
    <name type="scientific">Anaplasma marginale (strain St. Maries)</name>
    <dbReference type="NCBI Taxonomy" id="234826"/>
    <lineage>
        <taxon>Bacteria</taxon>
        <taxon>Pseudomonadati</taxon>
        <taxon>Pseudomonadota</taxon>
        <taxon>Alphaproteobacteria</taxon>
        <taxon>Rickettsiales</taxon>
        <taxon>Anaplasmataceae</taxon>
        <taxon>Anaplasma</taxon>
    </lineage>
</organism>
<gene>
    <name evidence="1" type="primary">acpS</name>
    <name type="ordered locus">AM506</name>
</gene>
<reference key="1">
    <citation type="journal article" date="2005" name="Proc. Natl. Acad. Sci. U.S.A.">
        <title>Complete genome sequencing of Anaplasma marginale reveals that the surface is skewed to two superfamilies of outer membrane proteins.</title>
        <authorList>
            <person name="Brayton K.A."/>
            <person name="Kappmeyer L.S."/>
            <person name="Herndon D.R."/>
            <person name="Dark M.J."/>
            <person name="Tibbals D.L."/>
            <person name="Palmer G.H."/>
            <person name="McGuire T.C."/>
            <person name="Knowles D.P. Jr."/>
        </authorList>
    </citation>
    <scope>NUCLEOTIDE SEQUENCE [LARGE SCALE GENOMIC DNA]</scope>
    <source>
        <strain>St. Maries</strain>
    </source>
</reference>
<keyword id="KW-0963">Cytoplasm</keyword>
<keyword id="KW-0275">Fatty acid biosynthesis</keyword>
<keyword id="KW-0276">Fatty acid metabolism</keyword>
<keyword id="KW-0444">Lipid biosynthesis</keyword>
<keyword id="KW-0443">Lipid metabolism</keyword>
<keyword id="KW-0460">Magnesium</keyword>
<keyword id="KW-0479">Metal-binding</keyword>
<keyword id="KW-0808">Transferase</keyword>
<name>ACPS_ANAMM</name>
<evidence type="ECO:0000255" key="1">
    <source>
        <dbReference type="HAMAP-Rule" id="MF_00101"/>
    </source>
</evidence>
<dbReference type="EC" id="2.7.8.7" evidence="1"/>
<dbReference type="EMBL" id="CP000030">
    <property type="protein sequence ID" value="AAV86534.1"/>
    <property type="molecule type" value="Genomic_DNA"/>
</dbReference>
<dbReference type="RefSeq" id="WP_011114304.1">
    <property type="nucleotide sequence ID" value="NC_004842.2"/>
</dbReference>
<dbReference type="SMR" id="Q5PAZ6"/>
<dbReference type="KEGG" id="ama:AM506"/>
<dbReference type="HOGENOM" id="CLU_089696_3_1_5"/>
<dbReference type="GO" id="GO:0005737">
    <property type="term" value="C:cytoplasm"/>
    <property type="evidence" value="ECO:0007669"/>
    <property type="project" value="UniProtKB-SubCell"/>
</dbReference>
<dbReference type="GO" id="GO:0008897">
    <property type="term" value="F:holo-[acyl-carrier-protein] synthase activity"/>
    <property type="evidence" value="ECO:0007669"/>
    <property type="project" value="UniProtKB-UniRule"/>
</dbReference>
<dbReference type="GO" id="GO:0000287">
    <property type="term" value="F:magnesium ion binding"/>
    <property type="evidence" value="ECO:0007669"/>
    <property type="project" value="UniProtKB-UniRule"/>
</dbReference>
<dbReference type="GO" id="GO:0006633">
    <property type="term" value="P:fatty acid biosynthetic process"/>
    <property type="evidence" value="ECO:0007669"/>
    <property type="project" value="UniProtKB-UniRule"/>
</dbReference>
<dbReference type="Gene3D" id="3.90.470.20">
    <property type="entry name" value="4'-phosphopantetheinyl transferase domain"/>
    <property type="match status" value="1"/>
</dbReference>
<dbReference type="HAMAP" id="MF_00101">
    <property type="entry name" value="AcpS"/>
    <property type="match status" value="1"/>
</dbReference>
<dbReference type="InterPro" id="IPR008278">
    <property type="entry name" value="4-PPantetheinyl_Trfase_dom"/>
</dbReference>
<dbReference type="InterPro" id="IPR037143">
    <property type="entry name" value="4-PPantetheinyl_Trfase_dom_sf"/>
</dbReference>
<dbReference type="InterPro" id="IPR002582">
    <property type="entry name" value="ACPS"/>
</dbReference>
<dbReference type="InterPro" id="IPR004568">
    <property type="entry name" value="Ppantetheine-prot_Trfase_dom"/>
</dbReference>
<dbReference type="NCBIfam" id="TIGR00516">
    <property type="entry name" value="acpS"/>
    <property type="match status" value="1"/>
</dbReference>
<dbReference type="NCBIfam" id="TIGR00556">
    <property type="entry name" value="pantethn_trn"/>
    <property type="match status" value="1"/>
</dbReference>
<dbReference type="NCBIfam" id="NF011253">
    <property type="entry name" value="PRK14659.1"/>
    <property type="match status" value="1"/>
</dbReference>
<dbReference type="Pfam" id="PF01648">
    <property type="entry name" value="ACPS"/>
    <property type="match status" value="1"/>
</dbReference>
<dbReference type="SUPFAM" id="SSF56214">
    <property type="entry name" value="4'-phosphopantetheinyl transferase"/>
    <property type="match status" value="1"/>
</dbReference>
<proteinExistence type="inferred from homology"/>
<feature type="chain" id="PRO_0000228268" description="Holo-[acyl-carrier-protein] synthase">
    <location>
        <begin position="1"/>
        <end position="120"/>
    </location>
</feature>
<feature type="binding site" evidence="1">
    <location>
        <position position="8"/>
    </location>
    <ligand>
        <name>Mg(2+)</name>
        <dbReference type="ChEBI" id="CHEBI:18420"/>
    </ligand>
</feature>
<feature type="binding site" evidence="1">
    <location>
        <position position="60"/>
    </location>
    <ligand>
        <name>Mg(2+)</name>
        <dbReference type="ChEBI" id="CHEBI:18420"/>
    </ligand>
</feature>
<accession>Q5PAZ6</accession>
<comment type="function">
    <text evidence="1">Transfers the 4'-phosphopantetheine moiety from coenzyme A to a Ser of acyl-carrier-protein.</text>
</comment>
<comment type="catalytic activity">
    <reaction evidence="1">
        <text>apo-[ACP] + CoA = holo-[ACP] + adenosine 3',5'-bisphosphate + H(+)</text>
        <dbReference type="Rhea" id="RHEA:12068"/>
        <dbReference type="Rhea" id="RHEA-COMP:9685"/>
        <dbReference type="Rhea" id="RHEA-COMP:9690"/>
        <dbReference type="ChEBI" id="CHEBI:15378"/>
        <dbReference type="ChEBI" id="CHEBI:29999"/>
        <dbReference type="ChEBI" id="CHEBI:57287"/>
        <dbReference type="ChEBI" id="CHEBI:58343"/>
        <dbReference type="ChEBI" id="CHEBI:64479"/>
        <dbReference type="EC" id="2.7.8.7"/>
    </reaction>
</comment>
<comment type="cofactor">
    <cofactor evidence="1">
        <name>Mg(2+)</name>
        <dbReference type="ChEBI" id="CHEBI:18420"/>
    </cofactor>
</comment>
<comment type="subcellular location">
    <subcellularLocation>
        <location evidence="1">Cytoplasm</location>
    </subcellularLocation>
</comment>
<comment type="similarity">
    <text evidence="1">Belongs to the P-Pant transferase superfamily. AcpS family.</text>
</comment>
<sequence>MIVGIGVDLVSVRRMQQLLERFGNRFTARAFSEVEIRDSLQYKNAHAVARHFAKRFAAKEAYVKAVGLGFGRGIEMRGVSVFNDALGKPRIAVSGDVGHNIELSLSDDGEYAIAFVVLHV</sequence>
<protein>
    <recommendedName>
        <fullName evidence="1">Holo-[acyl-carrier-protein] synthase</fullName>
        <shortName evidence="1">Holo-ACP synthase</shortName>
        <ecNumber evidence="1">2.7.8.7</ecNumber>
    </recommendedName>
    <alternativeName>
        <fullName evidence="1">4'-phosphopantetheinyl transferase AcpS</fullName>
    </alternativeName>
</protein>